<comment type="function">
    <text evidence="7">Transcription factor that regulates the expression of the gene clusters that mediate the biosynthesis of pseurotin and fumagillin (PubMed:24116213).</text>
</comment>
<comment type="subcellular location">
    <subcellularLocation>
        <location evidence="1">Nucleus</location>
    </subcellularLocation>
</comment>
<comment type="induction">
    <text evidence="6 7">Expression is under the control of the developmental and secondary metabolism regulators laeA and veA (PubMed:24082142, PubMed:24116213).</text>
</comment>
<comment type="disruption phenotype">
    <text evidence="7">Results in silencing of the fumagillin gene cluster and elimination of fumagillin biosynthesis (PubMed:24116213).</text>
</comment>
<comment type="biotechnology">
    <text evidence="3 4 5 8">Fumagillin and its derivatives have been intensely studied for their potential use in the treatment of amebiasis, microsporidiosis and rheumatoid arthritis (PubMed:12075057, PubMed:14913169, PubMed:18209961). They have also interesting antiangiogenic properties by the irreversible inhibition of human type 2 methionine aminopeptidase (METAP2) (PubMed:9177176).</text>
</comment>
<accession>Q4WAY8</accession>
<dbReference type="EMBL" id="AAHF01000014">
    <property type="protein sequence ID" value="EAL85124.1"/>
    <property type="molecule type" value="Genomic_DNA"/>
</dbReference>
<dbReference type="RefSeq" id="XP_747162.1">
    <property type="nucleotide sequence ID" value="XM_742069.1"/>
</dbReference>
<dbReference type="SMR" id="Q4WAY8"/>
<dbReference type="STRING" id="330879.Q4WAY8"/>
<dbReference type="EnsemblFungi" id="EAL85124">
    <property type="protein sequence ID" value="EAL85124"/>
    <property type="gene ID" value="AFUA_8G00420"/>
</dbReference>
<dbReference type="GeneID" id="3504498"/>
<dbReference type="KEGG" id="afm:AFUA_8G00420"/>
<dbReference type="VEuPathDB" id="FungiDB:Afu8g00420"/>
<dbReference type="eggNOG" id="ENOG502SKZ7">
    <property type="taxonomic scope" value="Eukaryota"/>
</dbReference>
<dbReference type="HOGENOM" id="CLU_034865_0_0_1"/>
<dbReference type="InParanoid" id="Q4WAY8"/>
<dbReference type="OMA" id="FPIDEMF"/>
<dbReference type="OrthoDB" id="4330117at2759"/>
<dbReference type="PHI-base" id="PHI:11372"/>
<dbReference type="Proteomes" id="UP000002530">
    <property type="component" value="Chromosome 8"/>
</dbReference>
<dbReference type="GO" id="GO:0005634">
    <property type="term" value="C:nucleus"/>
    <property type="evidence" value="ECO:0007669"/>
    <property type="project" value="UniProtKB-SubCell"/>
</dbReference>
<dbReference type="GO" id="GO:0003677">
    <property type="term" value="F:DNA binding"/>
    <property type="evidence" value="ECO:0007669"/>
    <property type="project" value="UniProtKB-KW"/>
</dbReference>
<dbReference type="GO" id="GO:0000981">
    <property type="term" value="F:DNA-binding transcription factor activity, RNA polymerase II-specific"/>
    <property type="evidence" value="ECO:0007669"/>
    <property type="project" value="InterPro"/>
</dbReference>
<dbReference type="GO" id="GO:0008270">
    <property type="term" value="F:zinc ion binding"/>
    <property type="evidence" value="ECO:0007669"/>
    <property type="project" value="InterPro"/>
</dbReference>
<dbReference type="GO" id="GO:1902086">
    <property type="term" value="P:fumagillin biosynthetic process"/>
    <property type="evidence" value="ECO:0000315"/>
    <property type="project" value="AspGD"/>
</dbReference>
<dbReference type="GO" id="GO:1902092">
    <property type="term" value="P:positive regulation of fumagillin biosynthetic process"/>
    <property type="evidence" value="ECO:0000315"/>
    <property type="project" value="AspGD"/>
</dbReference>
<dbReference type="GO" id="GO:1900851">
    <property type="term" value="P:positive regulation of pseurotin A biosynthetic process"/>
    <property type="evidence" value="ECO:0000315"/>
    <property type="project" value="AspGD"/>
</dbReference>
<dbReference type="GO" id="GO:1900790">
    <property type="term" value="P:pseurotin A biosynthetic process"/>
    <property type="evidence" value="ECO:0000315"/>
    <property type="project" value="AspGD"/>
</dbReference>
<dbReference type="CDD" id="cd00067">
    <property type="entry name" value="GAL4"/>
    <property type="match status" value="1"/>
</dbReference>
<dbReference type="Gene3D" id="4.10.240.10">
    <property type="entry name" value="Zn(2)-C6 fungal-type DNA-binding domain"/>
    <property type="match status" value="1"/>
</dbReference>
<dbReference type="InterPro" id="IPR036864">
    <property type="entry name" value="Zn2-C6_fun-type_DNA-bd_sf"/>
</dbReference>
<dbReference type="InterPro" id="IPR001138">
    <property type="entry name" value="Zn2Cys6_DnaBD"/>
</dbReference>
<dbReference type="SUPFAM" id="SSF57701">
    <property type="entry name" value="Zn2/Cys6 DNA-binding domain"/>
    <property type="match status" value="1"/>
</dbReference>
<dbReference type="PROSITE" id="PS00463">
    <property type="entry name" value="ZN2_CY6_FUNGAL_1"/>
    <property type="match status" value="1"/>
</dbReference>
<dbReference type="PROSITE" id="PS50048">
    <property type="entry name" value="ZN2_CY6_FUNGAL_2"/>
    <property type="match status" value="1"/>
</dbReference>
<organism>
    <name type="scientific">Aspergillus fumigatus (strain ATCC MYA-4609 / CBS 101355 / FGSC A1100 / Af293)</name>
    <name type="common">Neosartorya fumigata</name>
    <dbReference type="NCBI Taxonomy" id="330879"/>
    <lineage>
        <taxon>Eukaryota</taxon>
        <taxon>Fungi</taxon>
        <taxon>Dikarya</taxon>
        <taxon>Ascomycota</taxon>
        <taxon>Pezizomycotina</taxon>
        <taxon>Eurotiomycetes</taxon>
        <taxon>Eurotiomycetidae</taxon>
        <taxon>Eurotiales</taxon>
        <taxon>Aspergillaceae</taxon>
        <taxon>Aspergillus</taxon>
        <taxon>Aspergillus subgen. Fumigati</taxon>
    </lineage>
</organism>
<gene>
    <name evidence="10" type="primary">fumR</name>
    <name evidence="9" type="synonym">fapR</name>
    <name type="ORF">AFUA_8G00420</name>
</gene>
<reference key="1">
    <citation type="journal article" date="2005" name="Nature">
        <title>Genomic sequence of the pathogenic and allergenic filamentous fungus Aspergillus fumigatus.</title>
        <authorList>
            <person name="Nierman W.C."/>
            <person name="Pain A."/>
            <person name="Anderson M.J."/>
            <person name="Wortman J.R."/>
            <person name="Kim H.S."/>
            <person name="Arroyo J."/>
            <person name="Berriman M."/>
            <person name="Abe K."/>
            <person name="Archer D.B."/>
            <person name="Bermejo C."/>
            <person name="Bennett J.W."/>
            <person name="Bowyer P."/>
            <person name="Chen D."/>
            <person name="Collins M."/>
            <person name="Coulsen R."/>
            <person name="Davies R."/>
            <person name="Dyer P.S."/>
            <person name="Farman M.L."/>
            <person name="Fedorova N."/>
            <person name="Fedorova N.D."/>
            <person name="Feldblyum T.V."/>
            <person name="Fischer R."/>
            <person name="Fosker N."/>
            <person name="Fraser A."/>
            <person name="Garcia J.L."/>
            <person name="Garcia M.J."/>
            <person name="Goble A."/>
            <person name="Goldman G.H."/>
            <person name="Gomi K."/>
            <person name="Griffith-Jones S."/>
            <person name="Gwilliam R."/>
            <person name="Haas B.J."/>
            <person name="Haas H."/>
            <person name="Harris D.E."/>
            <person name="Horiuchi H."/>
            <person name="Huang J."/>
            <person name="Humphray S."/>
            <person name="Jimenez J."/>
            <person name="Keller N."/>
            <person name="Khouri H."/>
            <person name="Kitamoto K."/>
            <person name="Kobayashi T."/>
            <person name="Konzack S."/>
            <person name="Kulkarni R."/>
            <person name="Kumagai T."/>
            <person name="Lafton A."/>
            <person name="Latge J.-P."/>
            <person name="Li W."/>
            <person name="Lord A."/>
            <person name="Lu C."/>
            <person name="Majoros W.H."/>
            <person name="May G.S."/>
            <person name="Miller B.L."/>
            <person name="Mohamoud Y."/>
            <person name="Molina M."/>
            <person name="Monod M."/>
            <person name="Mouyna I."/>
            <person name="Mulligan S."/>
            <person name="Murphy L.D."/>
            <person name="O'Neil S."/>
            <person name="Paulsen I."/>
            <person name="Penalva M.A."/>
            <person name="Pertea M."/>
            <person name="Price C."/>
            <person name="Pritchard B.L."/>
            <person name="Quail M.A."/>
            <person name="Rabbinowitsch E."/>
            <person name="Rawlins N."/>
            <person name="Rajandream M.A."/>
            <person name="Reichard U."/>
            <person name="Renauld H."/>
            <person name="Robson G.D."/>
            <person name="Rodriguez de Cordoba S."/>
            <person name="Rodriguez-Pena J.M."/>
            <person name="Ronning C.M."/>
            <person name="Rutter S."/>
            <person name="Salzberg S.L."/>
            <person name="Sanchez M."/>
            <person name="Sanchez-Ferrero J.C."/>
            <person name="Saunders D."/>
            <person name="Seeger K."/>
            <person name="Squares R."/>
            <person name="Squares S."/>
            <person name="Takeuchi M."/>
            <person name="Tekaia F."/>
            <person name="Turner G."/>
            <person name="Vazquez de Aldana C.R."/>
            <person name="Weidman J."/>
            <person name="White O."/>
            <person name="Woodward J.R."/>
            <person name="Yu J.-H."/>
            <person name="Fraser C.M."/>
            <person name="Galagan J.E."/>
            <person name="Asai K."/>
            <person name="Machida M."/>
            <person name="Hall N."/>
            <person name="Barrell B.G."/>
            <person name="Denning D.W."/>
        </authorList>
    </citation>
    <scope>NUCLEOTIDE SEQUENCE [LARGE SCALE GENOMIC DNA]</scope>
    <source>
        <strain>ATCC MYA-4609 / CBS 101355 / FGSC A1100 / Af293</strain>
    </source>
</reference>
<reference key="2">
    <citation type="journal article" date="1952" name="Science">
        <title>The treatment of amebiasis with fumagillin.</title>
        <authorList>
            <person name="Killough J.H."/>
            <person name="Magill G.B."/>
            <person name="Smith R.C."/>
        </authorList>
    </citation>
    <scope>BIOTECHNOLOGY</scope>
</reference>
<reference key="3">
    <citation type="journal article" date="1997" name="Proc. Natl. Acad. Sci. U.S.A.">
        <title>The anti-angiogenic agent fumagillin covalently binds and inhibits the methionine aminopeptidase, MetAP-2.</title>
        <authorList>
            <person name="Sin N."/>
            <person name="Meng L."/>
            <person name="Wang M.Q."/>
            <person name="Wen J.J."/>
            <person name="Bornmann W.G."/>
            <person name="Crews C.M."/>
        </authorList>
    </citation>
    <scope>BIOTECHNOLOGY</scope>
</reference>
<reference key="4">
    <citation type="journal article" date="2002" name="N. Engl. J. Med.">
        <title>Fumagillin treatment of intestinal microsporidiosis.</title>
        <authorList>
            <consortium name="Agence Nationale de Recherches sur le SIDA 090 Study Group"/>
            <person name="Molina J.M."/>
            <person name="Tourneur M."/>
            <person name="Sarfati C."/>
            <person name="Chevret S."/>
            <person name="de Gouvello A."/>
            <person name="Gobert J.G."/>
            <person name="Balkan S."/>
            <person name="Derouin F."/>
        </authorList>
    </citation>
    <scope>BIOTECHNOLOGY</scope>
</reference>
<reference key="5">
    <citation type="journal article" date="2008" name="Inflamm. Res.">
        <title>An inhibitor of methionine aminopeptidase type-2, PPI-2458, ameliorates the pathophysiological disease processes of rheumatoid arthritis.</title>
        <authorList>
            <person name="Lazarus D.D."/>
            <person name="Doyle E.G."/>
            <person name="Bernier S.G."/>
            <person name="Rogers A.B."/>
            <person name="Labenski M.T."/>
            <person name="Wakefield J.D."/>
            <person name="Karp R.M."/>
            <person name="Clark E.J."/>
            <person name="Lorusso J."/>
            <person name="Hoyt J.G."/>
            <person name="Thompson C.D."/>
            <person name="Hannig G."/>
            <person name="Westlin W.F."/>
        </authorList>
    </citation>
    <scope>BIOTECHNOLOGY</scope>
</reference>
<reference key="6">
    <citation type="journal article" date="2013" name="Proc. Natl. Acad. Sci. U.S.A.">
        <title>Prototype of an intertwined secondary-metabolite supercluster.</title>
        <authorList>
            <person name="Wiemann P."/>
            <person name="Guo C.J."/>
            <person name="Palmer J.M."/>
            <person name="Sekonyela R."/>
            <person name="Wang C.C."/>
            <person name="Keller N.P."/>
        </authorList>
    </citation>
    <scope>IDENTIFICATION</scope>
    <scope>INDUCTION</scope>
</reference>
<reference key="7">
    <citation type="journal article" date="2013" name="PLoS ONE">
        <title>The fumagillin gene cluster, an example of hundreds of genes under veA control in Aspergillus fumigatus.</title>
        <authorList>
            <person name="Dhingra S."/>
            <person name="Lind A.L."/>
            <person name="Lin H.C."/>
            <person name="Tang Y."/>
            <person name="Rokas A."/>
            <person name="Calvo A.M."/>
        </authorList>
    </citation>
    <scope>INDUCTION</scope>
    <scope>FUNCTION</scope>
    <scope>DISRUPTION PHENOTYPE</scope>
</reference>
<keyword id="KW-0238">DNA-binding</keyword>
<keyword id="KW-0479">Metal-binding</keyword>
<keyword id="KW-0539">Nucleus</keyword>
<keyword id="KW-1185">Reference proteome</keyword>
<keyword id="KW-0804">Transcription</keyword>
<keyword id="KW-0805">Transcription regulation</keyword>
<keyword id="KW-0862">Zinc</keyword>
<evidence type="ECO:0000255" key="1">
    <source>
        <dbReference type="PROSITE-ProRule" id="PRU00227"/>
    </source>
</evidence>
<evidence type="ECO:0000256" key="2">
    <source>
        <dbReference type="SAM" id="MobiDB-lite"/>
    </source>
</evidence>
<evidence type="ECO:0000269" key="3">
    <source>
    </source>
</evidence>
<evidence type="ECO:0000269" key="4">
    <source>
    </source>
</evidence>
<evidence type="ECO:0000269" key="5">
    <source>
    </source>
</evidence>
<evidence type="ECO:0000269" key="6">
    <source>
    </source>
</evidence>
<evidence type="ECO:0000269" key="7">
    <source>
    </source>
</evidence>
<evidence type="ECO:0000269" key="8">
    <source>
    </source>
</evidence>
<evidence type="ECO:0000303" key="9">
    <source>
    </source>
</evidence>
<evidence type="ECO:0000303" key="10">
    <source>
    </source>
</evidence>
<protein>
    <recommendedName>
        <fullName evidence="10">C6 finger transcription factor fumR</fullName>
    </recommendedName>
    <alternativeName>
        <fullName evidence="10">Fumagillin gene cluster regulator</fullName>
    </alternativeName>
</protein>
<name>FUMR_ASPFU</name>
<proteinExistence type="evidence at protein level"/>
<feature type="chain" id="PRO_0000437043" description="C6 finger transcription factor fumR">
    <location>
        <begin position="1"/>
        <end position="622"/>
    </location>
</feature>
<feature type="DNA-binding region" description="Zn(2)-C6 fungal-type" evidence="1">
    <location>
        <begin position="94"/>
        <end position="123"/>
    </location>
</feature>
<feature type="region of interest" description="Disordered" evidence="2">
    <location>
        <begin position="127"/>
        <end position="175"/>
    </location>
</feature>
<feature type="region of interest" description="Disordered" evidence="2">
    <location>
        <begin position="206"/>
        <end position="248"/>
    </location>
</feature>
<feature type="region of interest" description="Disordered" evidence="2">
    <location>
        <begin position="299"/>
        <end position="360"/>
    </location>
</feature>
<feature type="region of interest" description="Disordered" evidence="2">
    <location>
        <begin position="556"/>
        <end position="585"/>
    </location>
</feature>
<feature type="compositionally biased region" description="Polar residues" evidence="2">
    <location>
        <begin position="148"/>
        <end position="167"/>
    </location>
</feature>
<feature type="compositionally biased region" description="Polar residues" evidence="2">
    <location>
        <begin position="217"/>
        <end position="226"/>
    </location>
</feature>
<feature type="compositionally biased region" description="Polar residues" evidence="2">
    <location>
        <begin position="347"/>
        <end position="360"/>
    </location>
</feature>
<feature type="compositionally biased region" description="Low complexity" evidence="2">
    <location>
        <begin position="556"/>
        <end position="571"/>
    </location>
</feature>
<sequence>MDVNRKRMVRMASAQRSEMLVRLSGKAKRWTVGGGGEVETHTFHTFCAGQKSYKSVVRRQRPRIARRDSRPSHPIANRGMNMLVHDLGFSHRACDRCHGQKLRCRRENNSDTCVRCARAGVRCTPRPMRLRSRAQSTKNTQQQQSQSPANGGSTQQLHVNQEQGPNDTNDEHSDHFEYLPTSLLDMPTDLNMGMDPSSLQVDIHPALTAPYGPEGSVHTSQPSGPQAPSHLRTAEQAGQTRWSDAPNLDTSDELYDFSLPATMRSSFPATYHRHRASLARNMSPQPAHQQGRDDMMVDFDQAEGNPRGSDGKDSRADSGYGNELSPSDLLRSPYGDAPDSDSELQPRGNSQDQGEQSNSILDTRHQNMTSWIRRLSDTNVQLHQHMQSIPLVGTGKKTRGSGAGTSLSPMELPVDSTFKLSSQYTGLLTSICARLQACRSCNDSQALAQLALDQPSQLLVLSSYMCLLASYDRILQHIEAWLKVRLKMGVRGSAMTLDDDESSSCFPTQLPSLAVGSFEVPKTSSIQSLVLTCIMETNVMHMHSLISEIMRPVSHPATGSASKTAASGPPAAEKRPGNGAADAGDGLSTVAKVTLQAIEANEDSTLRLVHTVSRLALQRVML</sequence>